<name>S39A8_MOUSE</name>
<feature type="signal peptide" evidence="3">
    <location>
        <begin position="1"/>
        <end position="19"/>
    </location>
</feature>
<feature type="chain" id="PRO_0000312708" description="Metal cation symporter ZIP8" evidence="3">
    <location>
        <begin position="20"/>
        <end position="462"/>
    </location>
</feature>
<feature type="topological domain" description="Extracellular" evidence="1">
    <location>
        <begin position="20"/>
        <end position="132"/>
    </location>
</feature>
<feature type="transmembrane region" description="Helical" evidence="3">
    <location>
        <begin position="133"/>
        <end position="153"/>
    </location>
</feature>
<feature type="topological domain" description="Cytoplasmic" evidence="1">
    <location>
        <begin position="154"/>
        <end position="160"/>
    </location>
</feature>
<feature type="transmembrane region" description="Helical" evidence="3">
    <location>
        <begin position="161"/>
        <end position="181"/>
    </location>
</feature>
<feature type="topological domain" description="Extracellular" evidence="1">
    <location>
        <begin position="182"/>
        <end position="191"/>
    </location>
</feature>
<feature type="transmembrane region" description="Helical" evidence="3">
    <location>
        <begin position="192"/>
        <end position="212"/>
    </location>
</feature>
<feature type="topological domain" description="Cytoplasmic" evidence="1">
    <location>
        <begin position="213"/>
        <end position="367"/>
    </location>
</feature>
<feature type="transmembrane region" description="Helical" evidence="3">
    <location>
        <begin position="368"/>
        <end position="388"/>
    </location>
</feature>
<feature type="topological domain" description="Extracellular" evidence="1">
    <location>
        <begin position="389"/>
        <end position="390"/>
    </location>
</feature>
<feature type="transmembrane region" description="Helical" evidence="3">
    <location>
        <begin position="391"/>
        <end position="411"/>
    </location>
</feature>
<feature type="topological domain" description="Cytoplasmic" evidence="1">
    <location>
        <begin position="412"/>
        <end position="431"/>
    </location>
</feature>
<feature type="transmembrane region" description="Helical" evidence="3">
    <location>
        <begin position="432"/>
        <end position="452"/>
    </location>
</feature>
<feature type="topological domain" description="Extracellular" evidence="1">
    <location>
        <begin position="453"/>
        <end position="462"/>
    </location>
</feature>
<feature type="short sequence motif" description="XEXPHE-motif" evidence="2">
    <location>
        <begin position="345"/>
        <end position="350"/>
    </location>
</feature>
<feature type="glycosylation site" description="N-linked (GlcNAc...) asparagine" evidence="3">
    <location>
        <position position="40"/>
    </location>
</feature>
<feature type="glycosylation site" description="N-linked (GlcNAc...) asparagine" evidence="3">
    <location>
        <position position="88"/>
    </location>
</feature>
<feature type="glycosylation site" description="N-linked (GlcNAc...) asparagine" evidence="3">
    <location>
        <position position="96"/>
    </location>
</feature>
<feature type="splice variant" id="VSP_029886" description="In isoform 2." evidence="18">
    <original>DGKTEPSSCTCLKGPKLSEIGTIAWMITLCDALHNFIDGLAIGASCTLSLLQGLSTSIA</original>
    <variation>VCPADCTFLLIFCVIFTIKVAGNAGSQYFKCSHVKPAHLHRRSHFTFFLLSLWMLRPTK</variation>
    <location>
        <begin position="283"/>
        <end position="341"/>
    </location>
</feature>
<feature type="splice variant" id="VSP_029887" description="In isoform 2." evidence="18">
    <location>
        <begin position="342"/>
        <end position="462"/>
    </location>
</feature>
<feature type="sequence conflict" description="In Ref. 1; BAC40727." evidence="20" ref="1">
    <original>S</original>
    <variation>R</variation>
    <location>
        <position position="94"/>
    </location>
</feature>
<feature type="sequence conflict" description="In Ref. 1; BAC40727." evidence="20" ref="1">
    <original>S</original>
    <variation>C</variation>
    <location>
        <position position="98"/>
    </location>
</feature>
<feature type="sequence conflict" description="In Ref. 1; BAC40727." evidence="20" ref="1">
    <original>I</original>
    <variation>M</variation>
    <location>
        <position position="104"/>
    </location>
</feature>
<feature type="sequence conflict" description="In Ref. 1; BAC40727." evidence="20" ref="1">
    <original>L</original>
    <variation>V</variation>
    <location>
        <position position="108"/>
    </location>
</feature>
<feature type="sequence conflict" description="In Ref. 1; BAC40727." evidence="20" ref="1">
    <original>C</original>
    <variation>W</variation>
    <location>
        <position position="113"/>
    </location>
</feature>
<feature type="sequence conflict" description="In Ref. 1; BAC40727." evidence="20" ref="1">
    <original>L</original>
    <variation>V</variation>
    <location>
        <position position="116"/>
    </location>
</feature>
<feature type="sequence conflict" description="In Ref. 1; BAB30465." evidence="20" ref="1">
    <original>H</original>
    <variation>Y</variation>
    <location>
        <position position="316"/>
    </location>
</feature>
<feature type="sequence conflict" description="In Ref. 1; BAB29610." evidence="20" ref="1">
    <original>N</original>
    <variation>S</variation>
    <location>
        <position position="371"/>
    </location>
</feature>
<reference key="1">
    <citation type="journal article" date="2005" name="Science">
        <title>The transcriptional landscape of the mammalian genome.</title>
        <authorList>
            <person name="Carninci P."/>
            <person name="Kasukawa T."/>
            <person name="Katayama S."/>
            <person name="Gough J."/>
            <person name="Frith M.C."/>
            <person name="Maeda N."/>
            <person name="Oyama R."/>
            <person name="Ravasi T."/>
            <person name="Lenhard B."/>
            <person name="Wells C."/>
            <person name="Kodzius R."/>
            <person name="Shimokawa K."/>
            <person name="Bajic V.B."/>
            <person name="Brenner S.E."/>
            <person name="Batalov S."/>
            <person name="Forrest A.R."/>
            <person name="Zavolan M."/>
            <person name="Davis M.J."/>
            <person name="Wilming L.G."/>
            <person name="Aidinis V."/>
            <person name="Allen J.E."/>
            <person name="Ambesi-Impiombato A."/>
            <person name="Apweiler R."/>
            <person name="Aturaliya R.N."/>
            <person name="Bailey T.L."/>
            <person name="Bansal M."/>
            <person name="Baxter L."/>
            <person name="Beisel K.W."/>
            <person name="Bersano T."/>
            <person name="Bono H."/>
            <person name="Chalk A.M."/>
            <person name="Chiu K.P."/>
            <person name="Choudhary V."/>
            <person name="Christoffels A."/>
            <person name="Clutterbuck D.R."/>
            <person name="Crowe M.L."/>
            <person name="Dalla E."/>
            <person name="Dalrymple B.P."/>
            <person name="de Bono B."/>
            <person name="Della Gatta G."/>
            <person name="di Bernardo D."/>
            <person name="Down T."/>
            <person name="Engstrom P."/>
            <person name="Fagiolini M."/>
            <person name="Faulkner G."/>
            <person name="Fletcher C.F."/>
            <person name="Fukushima T."/>
            <person name="Furuno M."/>
            <person name="Futaki S."/>
            <person name="Gariboldi M."/>
            <person name="Georgii-Hemming P."/>
            <person name="Gingeras T.R."/>
            <person name="Gojobori T."/>
            <person name="Green R.E."/>
            <person name="Gustincich S."/>
            <person name="Harbers M."/>
            <person name="Hayashi Y."/>
            <person name="Hensch T.K."/>
            <person name="Hirokawa N."/>
            <person name="Hill D."/>
            <person name="Huminiecki L."/>
            <person name="Iacono M."/>
            <person name="Ikeo K."/>
            <person name="Iwama A."/>
            <person name="Ishikawa T."/>
            <person name="Jakt M."/>
            <person name="Kanapin A."/>
            <person name="Katoh M."/>
            <person name="Kawasawa Y."/>
            <person name="Kelso J."/>
            <person name="Kitamura H."/>
            <person name="Kitano H."/>
            <person name="Kollias G."/>
            <person name="Krishnan S.P."/>
            <person name="Kruger A."/>
            <person name="Kummerfeld S.K."/>
            <person name="Kurochkin I.V."/>
            <person name="Lareau L.F."/>
            <person name="Lazarevic D."/>
            <person name="Lipovich L."/>
            <person name="Liu J."/>
            <person name="Liuni S."/>
            <person name="McWilliam S."/>
            <person name="Madan Babu M."/>
            <person name="Madera M."/>
            <person name="Marchionni L."/>
            <person name="Matsuda H."/>
            <person name="Matsuzawa S."/>
            <person name="Miki H."/>
            <person name="Mignone F."/>
            <person name="Miyake S."/>
            <person name="Morris K."/>
            <person name="Mottagui-Tabar S."/>
            <person name="Mulder N."/>
            <person name="Nakano N."/>
            <person name="Nakauchi H."/>
            <person name="Ng P."/>
            <person name="Nilsson R."/>
            <person name="Nishiguchi S."/>
            <person name="Nishikawa S."/>
            <person name="Nori F."/>
            <person name="Ohara O."/>
            <person name="Okazaki Y."/>
            <person name="Orlando V."/>
            <person name="Pang K.C."/>
            <person name="Pavan W.J."/>
            <person name="Pavesi G."/>
            <person name="Pesole G."/>
            <person name="Petrovsky N."/>
            <person name="Piazza S."/>
            <person name="Reed J."/>
            <person name="Reid J.F."/>
            <person name="Ring B.Z."/>
            <person name="Ringwald M."/>
            <person name="Rost B."/>
            <person name="Ruan Y."/>
            <person name="Salzberg S.L."/>
            <person name="Sandelin A."/>
            <person name="Schneider C."/>
            <person name="Schoenbach C."/>
            <person name="Sekiguchi K."/>
            <person name="Semple C.A."/>
            <person name="Seno S."/>
            <person name="Sessa L."/>
            <person name="Sheng Y."/>
            <person name="Shibata Y."/>
            <person name="Shimada H."/>
            <person name="Shimada K."/>
            <person name="Silva D."/>
            <person name="Sinclair B."/>
            <person name="Sperling S."/>
            <person name="Stupka E."/>
            <person name="Sugiura K."/>
            <person name="Sultana R."/>
            <person name="Takenaka Y."/>
            <person name="Taki K."/>
            <person name="Tammoja K."/>
            <person name="Tan S.L."/>
            <person name="Tang S."/>
            <person name="Taylor M.S."/>
            <person name="Tegner J."/>
            <person name="Teichmann S.A."/>
            <person name="Ueda H.R."/>
            <person name="van Nimwegen E."/>
            <person name="Verardo R."/>
            <person name="Wei C.L."/>
            <person name="Yagi K."/>
            <person name="Yamanishi H."/>
            <person name="Zabarovsky E."/>
            <person name="Zhu S."/>
            <person name="Zimmer A."/>
            <person name="Hide W."/>
            <person name="Bult C."/>
            <person name="Grimmond S.M."/>
            <person name="Teasdale R.D."/>
            <person name="Liu E.T."/>
            <person name="Brusic V."/>
            <person name="Quackenbush J."/>
            <person name="Wahlestedt C."/>
            <person name="Mattick J.S."/>
            <person name="Hume D.A."/>
            <person name="Kai C."/>
            <person name="Sasaki D."/>
            <person name="Tomaru Y."/>
            <person name="Fukuda S."/>
            <person name="Kanamori-Katayama M."/>
            <person name="Suzuki M."/>
            <person name="Aoki J."/>
            <person name="Arakawa T."/>
            <person name="Iida J."/>
            <person name="Imamura K."/>
            <person name="Itoh M."/>
            <person name="Kato T."/>
            <person name="Kawaji H."/>
            <person name="Kawagashira N."/>
            <person name="Kawashima T."/>
            <person name="Kojima M."/>
            <person name="Kondo S."/>
            <person name="Konno H."/>
            <person name="Nakano K."/>
            <person name="Ninomiya N."/>
            <person name="Nishio T."/>
            <person name="Okada M."/>
            <person name="Plessy C."/>
            <person name="Shibata K."/>
            <person name="Shiraki T."/>
            <person name="Suzuki S."/>
            <person name="Tagami M."/>
            <person name="Waki K."/>
            <person name="Watahiki A."/>
            <person name="Okamura-Oho Y."/>
            <person name="Suzuki H."/>
            <person name="Kawai J."/>
            <person name="Hayashizaki Y."/>
        </authorList>
    </citation>
    <scope>NUCLEOTIDE SEQUENCE [LARGE SCALE MRNA] (ISOFORMS 1 AND 2)</scope>
    <source>
        <strain>C57BL/6J</strain>
        <strain>NOD</strain>
        <tissue>Mammary gland</tissue>
        <tissue>Testis</tissue>
        <tissue>Thymus</tissue>
    </source>
</reference>
<reference key="2">
    <citation type="journal article" date="2004" name="Genome Res.">
        <title>The status, quality, and expansion of the NIH full-length cDNA project: the Mammalian Gene Collection (MGC).</title>
        <authorList>
            <consortium name="The MGC Project Team"/>
        </authorList>
    </citation>
    <scope>NUCLEOTIDE SEQUENCE [LARGE SCALE MRNA] (ISOFORM 1)</scope>
    <source>
        <strain>129</strain>
        <tissue>Mammary tumor</tissue>
    </source>
</reference>
<reference key="3">
    <citation type="journal article" date="2005" name="Proc. Natl. Acad. Sci. U.S.A.">
        <title>Identification of mouse SLC39A8 as the transporter responsible for cadmium-induced toxicity in the testis.</title>
        <authorList>
            <person name="Dalton T.P."/>
            <person name="He L."/>
            <person name="Wang B."/>
            <person name="Miller M.L."/>
            <person name="Jin L."/>
            <person name="Stringer K.F."/>
            <person name="Chang X."/>
            <person name="Baxter C.S."/>
            <person name="Nebert D.W."/>
        </authorList>
    </citation>
    <scope>FUNCTION</scope>
    <scope>BIOPHYSICOCHEMICAL PROPERTIES</scope>
    <scope>SUBCELLULAR LOCATION</scope>
    <scope>TISSUE SPECIFICITY</scope>
    <scope>MISCELLANEOUS</scope>
</reference>
<reference key="4">
    <citation type="journal article" date="2006" name="Mol. Pharmacol.">
        <title>ZIP8, member of the solute-carrier-39 (SLC39) metal-transporter family: characterization of transporter properties.</title>
        <authorList>
            <person name="He L."/>
            <person name="Girijashanker K."/>
            <person name="Dalton T.P."/>
            <person name="Reed J."/>
            <person name="Li H."/>
            <person name="Soleimani M."/>
            <person name="Nebert D.W."/>
        </authorList>
    </citation>
    <scope>FUNCTION</scope>
    <scope>TRANSPORTER ACTIVITY</scope>
    <scope>SUBSTRATE SPECIFICITY</scope>
    <scope>BIOPHYSICOCHEMICAL PROPERTIES</scope>
    <scope>SUBCELLULAR LOCATION</scope>
    <scope>GLYCOSYLATION</scope>
</reference>
<reference key="5">
    <citation type="journal article" date="2007" name="Am. J. Physiol.">
        <title>Enhanced cadmium-induced testicular necrosis and renal proximal tubule damage caused by gene-dose increase in a Slc39a8-transgenic mouse line.</title>
        <authorList>
            <person name="Wang B."/>
            <person name="Schneider S.N."/>
            <person name="Dragin N."/>
            <person name="Girijashanker K."/>
            <person name="Dalton T.P."/>
            <person name="He L."/>
            <person name="Miller M.L."/>
            <person name="Stringer K.F."/>
            <person name="Soleimani M."/>
            <person name="Richardson D.D."/>
            <person name="Nebert D.W."/>
        </authorList>
    </citation>
    <scope>FUNCTION</scope>
    <scope>SUBCELLULAR LOCATION</scope>
    <scope>MISCELLANEOUS</scope>
</reference>
<reference key="6">
    <citation type="journal article" date="2008" name="Biochem. Biophys. Res. Commun.">
        <title>Cd2+ versus Zn2+ uptake by the ZIP8 HCO3--dependent symporter: kinetics, electrogenicity and trafficking.</title>
        <authorList>
            <person name="Liu Z."/>
            <person name="Li H."/>
            <person name="Soleimani M."/>
            <person name="Girijashanker K."/>
            <person name="Reed J.M."/>
            <person name="He L."/>
            <person name="Dalton T.P."/>
            <person name="Nebert D.W."/>
        </authorList>
    </citation>
    <scope>FUNCTION</scope>
    <scope>TRANSPORTER ACTIVITY</scope>
    <scope>BIOPHYSICOCHEMICAL PROPERTIES</scope>
    <scope>SUBSTRATE SPECIFICITY</scope>
    <scope>SUBCELLULAR LOCATION</scope>
</reference>
<reference key="7">
    <citation type="journal article" date="2012" name="J. Biol. Chem.">
        <title>ZIP8 is an iron and zinc transporter whose cell-surface expression is up-regulated by cellular iron loading.</title>
        <authorList>
            <person name="Wang C.Y."/>
            <person name="Jenkitkasemwong S."/>
            <person name="Duarte S."/>
            <person name="Sparkman B.K."/>
            <person name="Shawki A."/>
            <person name="Mackenzie B."/>
            <person name="Knutson M.D."/>
        </authorList>
    </citation>
    <scope>FUNCTION</scope>
    <scope>TRANSPORTER ACTIVITY</scope>
</reference>
<reference key="8">
    <citation type="journal article" date="2012" name="PLoS ONE">
        <title>ZIP8 zinc transporter: indispensable role for both multiple-organ organogenesis and hematopoiesis in utero.</title>
        <authorList>
            <person name="Galvez-Peralta M."/>
            <person name="He L."/>
            <person name="Jorge-Nebert L.F."/>
            <person name="Wang B."/>
            <person name="Miller M.L."/>
            <person name="Eppert B.L."/>
            <person name="Afton S."/>
            <person name="Nebert D.W."/>
        </authorList>
    </citation>
    <scope>FUNCTION</scope>
    <scope>DISRUPTION PHENOTYPE</scope>
</reference>
<reference key="9">
    <citation type="journal article" date="2013" name="Cell Rep.">
        <title>ZIP8 regulates host defense through zinc-mediated inhibition of NF-kappaB.</title>
        <authorList>
            <person name="Liu M.J."/>
            <person name="Bao S."/>
            <person name="Galvez-Peralta M."/>
            <person name="Pyle C.J."/>
            <person name="Rudawsky A.C."/>
            <person name="Pavlovicz R.E."/>
            <person name="Killilea D.W."/>
            <person name="Li C."/>
            <person name="Nebert D.W."/>
            <person name="Wewers M.D."/>
            <person name="Knoell D.L."/>
        </authorList>
    </citation>
    <scope>FUNCTION</scope>
</reference>
<reference key="10">
    <citation type="journal article" date="2014" name="Cell">
        <title>Regulation of the catabolic cascade in osteoarthritis by the zinc-ZIP8-MTF1 axis.</title>
        <authorList>
            <person name="Kim J.H."/>
            <person name="Jeon J."/>
            <person name="Shin M."/>
            <person name="Won Y."/>
            <person name="Lee M."/>
            <person name="Kwak J.S."/>
            <person name="Lee G."/>
            <person name="Rhee J."/>
            <person name="Ryu J.H."/>
            <person name="Chun C.H."/>
            <person name="Chun J.S."/>
        </authorList>
    </citation>
    <scope>FUNCTION</scope>
    <scope>INDUCTION BY IL1B</scope>
</reference>
<reference key="11">
    <citation type="journal article" date="2016" name="Oncotarget">
        <title>Zinc- and bicarbonate-dependent ZIP8 transporter mediates selenite uptake.</title>
        <authorList>
            <person name="McDermott J.R."/>
            <person name="Geng X."/>
            <person name="Jiang L."/>
            <person name="Galvez-Peralta M."/>
            <person name="Chen F."/>
            <person name="Nebert D.W."/>
            <person name="Liu Z."/>
        </authorList>
    </citation>
    <scope>FUNCTION</scope>
    <scope>TRANSPORTER ACTIVITY</scope>
    <scope>BIOPHYSICOCHEMICAL PROPERTIES</scope>
    <scope>SUBCELLULAR LOCATION</scope>
</reference>
<reference key="12">
    <citation type="journal article" date="2017" name="J. Clin. Invest.">
        <title>Hepatic metal ion transporter ZIP8 regulates manganese homeostasis and manganese-dependent enzyme activity.</title>
        <authorList>
            <person name="Lin W."/>
            <person name="Vann D.R."/>
            <person name="Doulias P.T."/>
            <person name="Wang T."/>
            <person name="Landesberg G."/>
            <person name="Li X."/>
            <person name="Ricciotti E."/>
            <person name="Scalia R."/>
            <person name="He M."/>
            <person name="Hand N.J."/>
            <person name="Rader D.J."/>
        </authorList>
    </citation>
    <scope>FUNCTION</scope>
    <scope>SUBCELLULAR LOCATION</scope>
    <scope>DISRUPTION PHENOTYPE</scope>
</reference>
<reference key="13">
    <citation type="journal article" date="2018" name="Int. Immunopharmacol.">
        <title>ZIP8 induces monocyte adhesion to the aortas ex-vivo by regulating zinc influx.</title>
        <authorList>
            <person name="Cheng G."/>
            <person name="Chang F.J."/>
            <person name="You P.H."/>
            <person name="Lin J."/>
            <person name="Huang X.Y."/>
            <person name="Wu H.Y."/>
            <person name="Yan L."/>
            <person name="Deng J.Z."/>
            <person name="You H.J."/>
            <person name="Sun C.F."/>
        </authorList>
    </citation>
    <scope>FUNCTION</scope>
    <scope>INDUCTION</scope>
</reference>
<reference key="14">
    <citation type="journal article" date="2018" name="J. Clin. Invest.">
        <title>Zinc transporter Slc39a8 is essential for cardiac ventricular compaction.</title>
        <authorList>
            <person name="Lin W."/>
            <person name="Li D."/>
            <person name="Cheng L."/>
            <person name="Li L."/>
            <person name="Liu F."/>
            <person name="Hand N.J."/>
            <person name="Epstein J.A."/>
            <person name="Rader D.J."/>
        </authorList>
    </citation>
    <scope>FUNCTION</scope>
    <scope>TRANSPORTER ACTIVITY</scope>
    <scope>DISRUPTION PHENOTYPE</scope>
    <scope>DEVELOPMENTAL STAGE</scope>
    <scope>MISCELLANEOUS</scope>
</reference>
<reference key="15">
    <citation type="journal article" date="2018" name="Metallomics">
        <title>Role of ZIP8 in regulating cell morphology and NF-kappaB/Snail2 signaling.</title>
        <authorList>
            <person name="Geng X."/>
            <person name="Liu L."/>
            <person name="Banes-Berceli A."/>
            <person name="Yang Z."/>
            <person name="Kang P."/>
            <person name="Shen J."/>
            <person name="Tsai K.J."/>
            <person name="Liu Z."/>
        </authorList>
    </citation>
    <scope>FUNCTION</scope>
</reference>
<comment type="function">
    <text evidence="2 4 5 6 7 8 9 10 11 12 13 14 15 16">Electroneutral divalent metal cation:bicarbonate symporter of the plasma membrane mediating the cellular uptake of zinc and manganese, two divalent metal cations important for development, tissue homeostasis and immunity (PubMed:16638970, PubMed:18037372, PubMed:22563477, PubMed:29337306). Transports an electroneutral complex composed of a divalent metal cation and two bicarbonate anions or alternatively a bicarbonate and a selenite anion (PubMed:16638970, PubMed:18037372, PubMed:22563477, PubMed:27166256). Thereby, it also contributes to the cellular uptake of selenium, an essential trace metal and micronutrient (PubMed:27166256). Also imports cadmium a non-essential metal which is cytotoxic and carcinogenic (PubMed:15722412, PubMed:16638970, PubMed:17108009, PubMed:18037372, PubMed:24529376). May also transport iron and cobalt through membranes (PubMed:16638970, PubMed:22898811, PubMed:24529376). Through zinc import, indirectly regulates the metal-dependent transcription factor MTF1 and the expression of some metalloproteases involved in cartilage catabolism and also probably heart development (PubMed:24529376, PubMed:29337306). Also indirectly regulates the expression of proteins involved in cell morphology and cytoskeleton organization (PubMed:29927450). Indirectly controls innate immune function and inflammatory response by regulating zinc cellular uptake which in turn modulates the expression of genes specific of these processes (PubMed:23403290). Protects, for instance, cells from injury and death at the onset of inflammation (By similarity). By regulating zinc influx into monocytes also directly modulates their adhesion to endothelial cells and arteries (PubMed:30015240). Reclaims manganese from the bile at the apical membrane of hepatocytes, thereby regulating the activity of the manganese-dependent enzymes through the systemic levels of the nutrient (PubMed:28481222). Also participates in manganese reabsorption in the proximal tubule of the kidney (By similarity). By mediating the extracellular uptake of manganese by cells of the blood-brain barrier, may also play a role in the transport of the micronutrient to the brain. With manganese cellular uptake also participates in mitochondrial proper function (By similarity). Finally, also probably functions intracellularly, translocating zinc from lysosome to cytosol to indirectly enhance the expression of specific genes during TCR-mediated T cell activation (By similarity).</text>
</comment>
<comment type="catalytic activity">
    <reaction evidence="22">
        <text>Zn(2+)(out) + 2 hydrogencarbonate(out) = Zn(2+)(in) + 2 hydrogencarbonate(in)</text>
        <dbReference type="Rhea" id="RHEA:62252"/>
        <dbReference type="ChEBI" id="CHEBI:17544"/>
        <dbReference type="ChEBI" id="CHEBI:29105"/>
    </reaction>
</comment>
<comment type="catalytic activity">
    <reaction evidence="12">
        <text>selenite(out) + Zn(2+)(out) + hydrogencarbonate(out) = selenite(in) + Zn(2+)(in) + hydrogencarbonate(in)</text>
        <dbReference type="Rhea" id="RHEA:62264"/>
        <dbReference type="ChEBI" id="CHEBI:17544"/>
        <dbReference type="ChEBI" id="CHEBI:18212"/>
        <dbReference type="ChEBI" id="CHEBI:29105"/>
    </reaction>
</comment>
<comment type="catalytic activity">
    <reaction evidence="21">
        <text>Mn(2+)(out) + 2 hydrogencarbonate(out) = Mn(2+)(in) + 2 hydrogencarbonate(in)</text>
        <dbReference type="Rhea" id="RHEA:62260"/>
        <dbReference type="ChEBI" id="CHEBI:17544"/>
        <dbReference type="ChEBI" id="CHEBI:29035"/>
    </reaction>
</comment>
<comment type="catalytic activity">
    <reaction evidence="5">
        <text>Cd(2+)(out) + 2 hydrogencarbonate(out) = Cd(2+)(in) + 2 hydrogencarbonate(in)</text>
        <dbReference type="Rhea" id="RHEA:62256"/>
        <dbReference type="ChEBI" id="CHEBI:17544"/>
        <dbReference type="ChEBI" id="CHEBI:48775"/>
    </reaction>
</comment>
<comment type="catalytic activity">
    <reaction evidence="23">
        <text>Fe(2+)(out) + 2 hydrogencarbonate(out) = Fe(2+)(in) + 2 hydrogencarbonate(in)</text>
        <dbReference type="Rhea" id="RHEA:62368"/>
        <dbReference type="ChEBI" id="CHEBI:17544"/>
        <dbReference type="ChEBI" id="CHEBI:29033"/>
    </reaction>
</comment>
<comment type="catalytic activity">
    <reaction evidence="1">
        <text>Co(2+)(out) + 2 hydrogencarbonate(out) = Co(2+)(in) + 2 hydrogencarbonate(in)</text>
        <dbReference type="Rhea" id="RHEA:73491"/>
        <dbReference type="ChEBI" id="CHEBI:17544"/>
        <dbReference type="ChEBI" id="CHEBI:48828"/>
    </reaction>
</comment>
<comment type="biophysicochemical properties">
    <kinetics>
        <KM evidence="4">0.84 uM for Cd(2+)</KM>
        <KM evidence="5">0.62 uM for Cd(2+)</KM>
        <KM evidence="7">0.48 uM for Cd(2+) (measured in xenopus oocytes)</KM>
        <KM evidence="7">0.26 uM for Zn(2+) (measured in xenopus oocytes)</KM>
        <KM evidence="5">2.2 uM for Mn(2+)</KM>
        <KM evidence="12">5.9 uM for selenite/HSeO3(-)</KM>
        <Vmax evidence="4">204.0 pmol/min/mg enzyme for the uptake of Cd(2+)</Vmax>
        <Vmax evidence="5">92.0 pmol/min/mg enzyme for the uptake of Cd(2+)</Vmax>
        <Vmax evidence="5">73.8 pmol/min/mg enzyme for the uptake of Mn(2+)</Vmax>
    </kinetics>
    <phDependence>
        <text evidence="5">Optimum pH is 7.5.</text>
    </phDependence>
</comment>
<comment type="subunit">
    <text evidence="1">Homodimer.</text>
</comment>
<comment type="subcellular location">
    <subcellularLocation>
        <location evidence="4 7 12">Cell membrane</location>
        <topology evidence="3">Multi-pass membrane protein</topology>
    </subcellularLocation>
    <subcellularLocation>
        <location evidence="5 6 13">Apical cell membrane</location>
        <topology evidence="3">Multi-pass membrane protein</topology>
    </subcellularLocation>
    <subcellularLocation>
        <location evidence="2">Basolateral cell membrane</location>
        <topology evidence="3">Multi-pass membrane protein</topology>
    </subcellularLocation>
    <subcellularLocation>
        <location evidence="2">Lysosome membrane</location>
        <topology evidence="3">Multi-pass membrane protein</topology>
    </subcellularLocation>
    <text evidence="2">Localizes to the lysosome of activated T-cells. A large fraction of the protein is found intracellularly in microvascular capillary endothelial cells that constitute the blood-brain barrier. Localized and functional at both apical and basolateral membranes of microvascular capillary endothelial cells that constitute the blood-brain barrier.</text>
</comment>
<comment type="alternative products">
    <event type="alternative splicing"/>
    <isoform>
        <id>Q91W10-1</id>
        <name>1</name>
        <sequence type="displayed"/>
    </isoform>
    <isoform>
        <id>Q91W10-2</id>
        <name>2</name>
        <sequence type="described" ref="VSP_029886 VSP_029887"/>
    </isoform>
</comment>
<comment type="tissue specificity">
    <text evidence="4">Ubiquitously expressed.</text>
</comment>
<comment type="developmental stage">
    <text evidence="14">Expressed in the developing heart by cardiac endothelial cells with a peak of expression at 12.5 dpc and a decline to low levels in adult heart.</text>
</comment>
<comment type="induction">
    <text evidence="11 16">Up-regulated in monocytes upon adhesion and recruitment to arteries (PubMed:30015240). Up-regulated by the pro-inflammatory cytokine interleukin-1 beta/IL1B (PubMed:24529376).</text>
</comment>
<comment type="PTM">
    <text evidence="1 5">N-glycosylated (PubMed:16638970). N-glycosylation is not required for proper iron and zinc transport (By similarity).</text>
</comment>
<comment type="disruption phenotype">
    <text evidence="8 13 14">The homozygous knockout of Slc39a8 is embryonic lethal by 16.5 dpc. Hearts exhibit hypertrabeculation and non-compaction phenotypes including excessive trabeculae and thin compact myocardium. These phenotypes are evident at 12.5 dpc and prominent at 14.5 dpc, and embryos that survive until 16.5 dpc display an even stronger phenotype. Ventricular septal defects are also observed. Some 14.5 dpc embryos exhibit body edema, suggesting that cardiac muscle function is compromised. Hearts display increased cardiomyocyte proliferation (PubMed:29337306). This is associated with decreased expression of metalloproteases and impaired degradation of the extracellular matrix leading to its aberrant accumulation in heart (PubMed:29337306). In mice homozygous for a hypomorphic allele of the gene, resulting in significant decreased expression of the protein, hematopoiesis and the development of multiple organs are affected from very early embryogenesis (PubMed:22563477). Conditional knockout of the gene at the level of the whole organism decreases manganese levels in tissues but has no effect on zinc and iron (PubMed:28481222). Conditional liver-specific knockout of the gene results in decreased systemic tissue manganese levels coupled to increased manganese in bile but has no effect on zinc or iron levels (PubMed:28481222).</text>
</comment>
<comment type="miscellaneous">
    <text evidence="4 6">The decreased expression of the channel in testis vascular endothelial cells confers the resistance to cadmium-induced testicular damage trait to some mice strains.</text>
</comment>
<comment type="similarity">
    <text evidence="20">Belongs to the ZIP transporter (TC 2.A.5) family.</text>
</comment>
<accession>Q91W10</accession>
<accession>Q8BTQ3</accession>
<accession>Q8BUD6</accession>
<accession>Q9D426</accession>
<accession>Q9D5V4</accession>
<proteinExistence type="evidence at protein level"/>
<evidence type="ECO:0000250" key="1">
    <source>
        <dbReference type="UniProtKB" id="Q5FVQ0"/>
    </source>
</evidence>
<evidence type="ECO:0000250" key="2">
    <source>
        <dbReference type="UniProtKB" id="Q9C0K1"/>
    </source>
</evidence>
<evidence type="ECO:0000255" key="3"/>
<evidence type="ECO:0000269" key="4">
    <source>
    </source>
</evidence>
<evidence type="ECO:0000269" key="5">
    <source>
    </source>
</evidence>
<evidence type="ECO:0000269" key="6">
    <source>
    </source>
</evidence>
<evidence type="ECO:0000269" key="7">
    <source>
    </source>
</evidence>
<evidence type="ECO:0000269" key="8">
    <source>
    </source>
</evidence>
<evidence type="ECO:0000269" key="9">
    <source>
    </source>
</evidence>
<evidence type="ECO:0000269" key="10">
    <source>
    </source>
</evidence>
<evidence type="ECO:0000269" key="11">
    <source>
    </source>
</evidence>
<evidence type="ECO:0000269" key="12">
    <source>
    </source>
</evidence>
<evidence type="ECO:0000269" key="13">
    <source>
    </source>
</evidence>
<evidence type="ECO:0000269" key="14">
    <source>
    </source>
</evidence>
<evidence type="ECO:0000269" key="15">
    <source>
    </source>
</evidence>
<evidence type="ECO:0000269" key="16">
    <source>
    </source>
</evidence>
<evidence type="ECO:0000303" key="17">
    <source>
    </source>
</evidence>
<evidence type="ECO:0000303" key="18">
    <source>
    </source>
</evidence>
<evidence type="ECO:0000303" key="19">
    <source>
    </source>
</evidence>
<evidence type="ECO:0000305" key="20"/>
<evidence type="ECO:0000305" key="21">
    <source>
    </source>
</evidence>
<evidence type="ECO:0000305" key="22">
    <source>
    </source>
</evidence>
<evidence type="ECO:0000305" key="23">
    <source>
    </source>
</evidence>
<evidence type="ECO:0000312" key="24">
    <source>
        <dbReference type="MGI" id="MGI:1914797"/>
    </source>
</evidence>
<protein>
    <recommendedName>
        <fullName evidence="21">Metal cation symporter ZIP8</fullName>
    </recommendedName>
    <alternativeName>
        <fullName evidence="24">Solute carrier family 39 member 8</fullName>
    </alternativeName>
    <alternativeName>
        <fullName evidence="17">Zrt- and Irt-like protein 8</fullName>
        <shortName evidence="17">ZIP-8</shortName>
    </alternativeName>
</protein>
<sequence>MAPGRAVAGLLLLAATSLGHPSEGPELAFSEDVLSVFGANRSLSAAQLGRLLERLGAASQQGALDLGQLHFNQCLSAEDIFSLHGFSNVTQITSSNFSAICPAILQQLNFHPCEDLRKHNAKPSLSEVWGYGFLSVTIINLASLLGLILTPLIKKSYFPKILTYFVGLAIGTLFSNAIFQLIPEAFGFNPKIDNYVEKAVAVFGGFYMLFFVERTLKMLLKTYGQNDHTHFRNDDFGSKEKTHQPKTLPLPAVNGVTCYANPAVTEPNGHIHFDTVSVVSLQDGKTEPSSCTCLKGPKLSEIGTIAWMITLCDALHNFIDGLAIGASCTLSLLQGLSTSIAILCEEFPHELGDFVILLNAGMSTRQALLFNFLSACSCYVGLAFGILVGNNFAPNIIFALAGGMFLYISLADMFPEMNDMLREKVTGRQTDFTFFMIQNAGMLTGFTAILLITLYAGDIELQ</sequence>
<dbReference type="EMBL" id="AK014895">
    <property type="protein sequence ID" value="BAB29610.1"/>
    <property type="molecule type" value="mRNA"/>
</dbReference>
<dbReference type="EMBL" id="AK016853">
    <property type="protein sequence ID" value="BAB30465.1"/>
    <property type="molecule type" value="mRNA"/>
</dbReference>
<dbReference type="EMBL" id="AK085740">
    <property type="protein sequence ID" value="BAC39526.1"/>
    <property type="molecule type" value="mRNA"/>
</dbReference>
<dbReference type="EMBL" id="AK089060">
    <property type="protein sequence ID" value="BAC40727.1"/>
    <property type="molecule type" value="mRNA"/>
</dbReference>
<dbReference type="EMBL" id="BC006731">
    <property type="protein sequence ID" value="AAH06731.1"/>
    <property type="molecule type" value="mRNA"/>
</dbReference>
<dbReference type="CCDS" id="CCDS17859.1">
    <molecule id="Q91W10-1"/>
</dbReference>
<dbReference type="RefSeq" id="NP_001128621.1">
    <molecule id="Q91W10-1"/>
    <property type="nucleotide sequence ID" value="NM_001135149.1"/>
</dbReference>
<dbReference type="RefSeq" id="NP_001128622.1">
    <molecule id="Q91W10-1"/>
    <property type="nucleotide sequence ID" value="NM_001135150.1"/>
</dbReference>
<dbReference type="RefSeq" id="NP_080504.3">
    <molecule id="Q91W10-1"/>
    <property type="nucleotide sequence ID" value="NM_026228.5"/>
</dbReference>
<dbReference type="RefSeq" id="XP_006501997.1">
    <molecule id="Q91W10-1"/>
    <property type="nucleotide sequence ID" value="XM_006501934.4"/>
</dbReference>
<dbReference type="SMR" id="Q91W10"/>
<dbReference type="FunCoup" id="Q91W10">
    <property type="interactions" value="214"/>
</dbReference>
<dbReference type="STRING" id="10090.ENSMUSP00000128245"/>
<dbReference type="TCDB" id="2.A.5.4.8">
    <property type="family name" value="the zinc (zn(2+))-iron (fe(2+)) permease (zip) family"/>
</dbReference>
<dbReference type="GlyCosmos" id="Q91W10">
    <property type="glycosylation" value="3 sites, No reported glycans"/>
</dbReference>
<dbReference type="GlyGen" id="Q91W10">
    <property type="glycosylation" value="3 sites"/>
</dbReference>
<dbReference type="PhosphoSitePlus" id="Q91W10"/>
<dbReference type="PaxDb" id="10090-ENSMUSP00000080640"/>
<dbReference type="PeptideAtlas" id="Q91W10"/>
<dbReference type="ProteomicsDB" id="256685">
    <molecule id="Q91W10-1"/>
</dbReference>
<dbReference type="ProteomicsDB" id="256686">
    <molecule id="Q91W10-2"/>
</dbReference>
<dbReference type="Antibodypedia" id="45037">
    <property type="antibodies" value="176 antibodies from 29 providers"/>
</dbReference>
<dbReference type="DNASU" id="67547"/>
<dbReference type="Ensembl" id="ENSMUST00000029810.6">
    <molecule id="Q91W10-1"/>
    <property type="protein sequence ID" value="ENSMUSP00000029810.6"/>
    <property type="gene ID" value="ENSMUSG00000053897.16"/>
</dbReference>
<dbReference type="Ensembl" id="ENSMUST00000081978.10">
    <molecule id="Q91W10-1"/>
    <property type="protein sequence ID" value="ENSMUSP00000080640.4"/>
    <property type="gene ID" value="ENSMUSG00000053897.16"/>
</dbReference>
<dbReference type="Ensembl" id="ENSMUST00000167390.8">
    <molecule id="Q91W10-1"/>
    <property type="protein sequence ID" value="ENSMUSP00000128245.2"/>
    <property type="gene ID" value="ENSMUSG00000053897.16"/>
</dbReference>
<dbReference type="Ensembl" id="ENSMUST00000180196.8">
    <molecule id="Q91W10-1"/>
    <property type="protein sequence ID" value="ENSMUSP00000136634.2"/>
    <property type="gene ID" value="ENSMUSG00000053897.16"/>
</dbReference>
<dbReference type="GeneID" id="67547"/>
<dbReference type="KEGG" id="mmu:67547"/>
<dbReference type="UCSC" id="uc008rlz.3">
    <molecule id="Q91W10-1"/>
    <property type="organism name" value="mouse"/>
</dbReference>
<dbReference type="UCSC" id="uc008rma.2">
    <molecule id="Q91W10-2"/>
    <property type="organism name" value="mouse"/>
</dbReference>
<dbReference type="AGR" id="MGI:1914797"/>
<dbReference type="CTD" id="64116"/>
<dbReference type="MGI" id="MGI:1914797">
    <property type="gene designation" value="Slc39a8"/>
</dbReference>
<dbReference type="VEuPathDB" id="HostDB:ENSMUSG00000053897"/>
<dbReference type="eggNOG" id="KOG2693">
    <property type="taxonomic scope" value="Eukaryota"/>
</dbReference>
<dbReference type="GeneTree" id="ENSGT00940000158926"/>
<dbReference type="HOGENOM" id="CLU_015114_13_0_1"/>
<dbReference type="InParanoid" id="Q91W10"/>
<dbReference type="OMA" id="ITMFAGE"/>
<dbReference type="OrthoDB" id="200954at2759"/>
<dbReference type="PhylomeDB" id="Q91W10"/>
<dbReference type="TreeFam" id="TF318470"/>
<dbReference type="Reactome" id="R-MMU-442380">
    <property type="pathway name" value="Zinc influx into cells by the SLC39 gene family"/>
</dbReference>
<dbReference type="BioGRID-ORCS" id="67547">
    <property type="hits" value="2 hits in 78 CRISPR screens"/>
</dbReference>
<dbReference type="ChiTaRS" id="Slc39a8">
    <property type="organism name" value="mouse"/>
</dbReference>
<dbReference type="PRO" id="PR:Q91W10"/>
<dbReference type="Proteomes" id="UP000000589">
    <property type="component" value="Chromosome 3"/>
</dbReference>
<dbReference type="RNAct" id="Q91W10">
    <property type="molecule type" value="protein"/>
</dbReference>
<dbReference type="Bgee" id="ENSMUSG00000053897">
    <property type="expression patterns" value="Expressed in molar tooth and 250 other cell types or tissues"/>
</dbReference>
<dbReference type="GO" id="GO:0016324">
    <property type="term" value="C:apical plasma membrane"/>
    <property type="evidence" value="ECO:0000314"/>
    <property type="project" value="UniProtKB"/>
</dbReference>
<dbReference type="GO" id="GO:0016323">
    <property type="term" value="C:basolateral plasma membrane"/>
    <property type="evidence" value="ECO:0000250"/>
    <property type="project" value="UniProtKB"/>
</dbReference>
<dbReference type="GO" id="GO:0005765">
    <property type="term" value="C:lysosomal membrane"/>
    <property type="evidence" value="ECO:0000250"/>
    <property type="project" value="UniProtKB"/>
</dbReference>
<dbReference type="GO" id="GO:0031090">
    <property type="term" value="C:organelle membrane"/>
    <property type="evidence" value="ECO:0000250"/>
    <property type="project" value="UniProtKB"/>
</dbReference>
<dbReference type="GO" id="GO:0005886">
    <property type="term" value="C:plasma membrane"/>
    <property type="evidence" value="ECO:0000314"/>
    <property type="project" value="UniProtKB"/>
</dbReference>
<dbReference type="GO" id="GO:0140410">
    <property type="term" value="F:monoatomic cation:bicarbonate symporter activity"/>
    <property type="evidence" value="ECO:0000314"/>
    <property type="project" value="UniProtKB"/>
</dbReference>
<dbReference type="GO" id="GO:0140412">
    <property type="term" value="F:zinc:bicarbonate symporter activity"/>
    <property type="evidence" value="ECO:0000314"/>
    <property type="project" value="UniProtKB"/>
</dbReference>
<dbReference type="GO" id="GO:0006525">
    <property type="term" value="P:arginine metabolic process"/>
    <property type="evidence" value="ECO:0000315"/>
    <property type="project" value="UniProtKB"/>
</dbReference>
<dbReference type="GO" id="GO:0015701">
    <property type="term" value="P:bicarbonate transport"/>
    <property type="evidence" value="ECO:0000314"/>
    <property type="project" value="UniProtKB"/>
</dbReference>
<dbReference type="GO" id="GO:0070574">
    <property type="term" value="P:cadmium ion transmembrane transport"/>
    <property type="evidence" value="ECO:0000314"/>
    <property type="project" value="UniProtKB"/>
</dbReference>
<dbReference type="GO" id="GO:1990079">
    <property type="term" value="P:cartilage homeostasis"/>
    <property type="evidence" value="ECO:0000315"/>
    <property type="project" value="UniProtKB"/>
</dbReference>
<dbReference type="GO" id="GO:0098849">
    <property type="term" value="P:cellular detoxification of cadmium ion"/>
    <property type="evidence" value="ECO:0000250"/>
    <property type="project" value="UniProtKB"/>
</dbReference>
<dbReference type="GO" id="GO:0006824">
    <property type="term" value="P:cobalt ion transport"/>
    <property type="evidence" value="ECO:0000250"/>
    <property type="project" value="UniProtKB"/>
</dbReference>
<dbReference type="GO" id="GO:0006351">
    <property type="term" value="P:DNA-templated transcription"/>
    <property type="evidence" value="ECO:0000315"/>
    <property type="project" value="UniProtKB"/>
</dbReference>
<dbReference type="GO" id="GO:0030198">
    <property type="term" value="P:extracellular matrix organization"/>
    <property type="evidence" value="ECO:0000315"/>
    <property type="project" value="UniProtKB"/>
</dbReference>
<dbReference type="GO" id="GO:0030026">
    <property type="term" value="P:intracellular manganese ion homeostasis"/>
    <property type="evidence" value="ECO:0000315"/>
    <property type="project" value="UniProtKB"/>
</dbReference>
<dbReference type="GO" id="GO:0006882">
    <property type="term" value="P:intracellular zinc ion homeostasis"/>
    <property type="evidence" value="ECO:0000314"/>
    <property type="project" value="UniProtKB"/>
</dbReference>
<dbReference type="GO" id="GO:0098711">
    <property type="term" value="P:iron ion import across plasma membrane"/>
    <property type="evidence" value="ECO:0000314"/>
    <property type="project" value="UniProtKB"/>
</dbReference>
<dbReference type="GO" id="GO:0061757">
    <property type="term" value="P:leukocyte adhesion to arterial endothelial cell"/>
    <property type="evidence" value="ECO:0000315"/>
    <property type="project" value="UniProtKB"/>
</dbReference>
<dbReference type="GO" id="GO:0071421">
    <property type="term" value="P:manganese ion transmembrane transport"/>
    <property type="evidence" value="ECO:0000314"/>
    <property type="project" value="UniProtKB"/>
</dbReference>
<dbReference type="GO" id="GO:0015694">
    <property type="term" value="P:mercury ion transport"/>
    <property type="evidence" value="ECO:0000314"/>
    <property type="project" value="UniProtKB"/>
</dbReference>
<dbReference type="GO" id="GO:1990540">
    <property type="term" value="P:mitochondrial manganese ion transmembrane transport"/>
    <property type="evidence" value="ECO:0000250"/>
    <property type="project" value="UniProtKB"/>
</dbReference>
<dbReference type="GO" id="GO:0043124">
    <property type="term" value="P:negative regulation of canonical NF-kappaB signal transduction"/>
    <property type="evidence" value="ECO:0007669"/>
    <property type="project" value="Ensembl"/>
</dbReference>
<dbReference type="GO" id="GO:0050728">
    <property type="term" value="P:negative regulation of inflammatory response"/>
    <property type="evidence" value="ECO:0007669"/>
    <property type="project" value="Ensembl"/>
</dbReference>
<dbReference type="GO" id="GO:0097080">
    <property type="term" value="P:plasma membrane selenite transport"/>
    <property type="evidence" value="ECO:0000314"/>
    <property type="project" value="UniProtKB"/>
</dbReference>
<dbReference type="GO" id="GO:0006487">
    <property type="term" value="P:protein N-linked glycosylation"/>
    <property type="evidence" value="ECO:0000315"/>
    <property type="project" value="UniProtKB"/>
</dbReference>
<dbReference type="GO" id="GO:0006355">
    <property type="term" value="P:regulation of DNA-templated transcription"/>
    <property type="evidence" value="ECO:0000315"/>
    <property type="project" value="UniProtKB"/>
</dbReference>
<dbReference type="GO" id="GO:0042391">
    <property type="term" value="P:regulation of membrane potential"/>
    <property type="evidence" value="ECO:0000250"/>
    <property type="project" value="UniProtKB"/>
</dbReference>
<dbReference type="GO" id="GO:0071578">
    <property type="term" value="P:zinc ion import across plasma membrane"/>
    <property type="evidence" value="ECO:0000314"/>
    <property type="project" value="UniProtKB"/>
</dbReference>
<dbReference type="GO" id="GO:0071577">
    <property type="term" value="P:zinc ion transmembrane transport"/>
    <property type="evidence" value="ECO:0000315"/>
    <property type="project" value="UniProtKB"/>
</dbReference>
<dbReference type="GO" id="GO:0006829">
    <property type="term" value="P:zinc ion transport"/>
    <property type="evidence" value="ECO:0000250"/>
    <property type="project" value="UniProtKB"/>
</dbReference>
<dbReference type="InterPro" id="IPR003689">
    <property type="entry name" value="ZIP"/>
</dbReference>
<dbReference type="InterPro" id="IPR050799">
    <property type="entry name" value="ZIP_Transporter"/>
</dbReference>
<dbReference type="PANTHER" id="PTHR12191:SF2">
    <property type="entry name" value="METAL CATION SYMPORTER ZIP8"/>
    <property type="match status" value="1"/>
</dbReference>
<dbReference type="PANTHER" id="PTHR12191">
    <property type="entry name" value="SOLUTE CARRIER FAMILY 39"/>
    <property type="match status" value="1"/>
</dbReference>
<dbReference type="Pfam" id="PF02535">
    <property type="entry name" value="Zip"/>
    <property type="match status" value="1"/>
</dbReference>
<organism>
    <name type="scientific">Mus musculus</name>
    <name type="common">Mouse</name>
    <dbReference type="NCBI Taxonomy" id="10090"/>
    <lineage>
        <taxon>Eukaryota</taxon>
        <taxon>Metazoa</taxon>
        <taxon>Chordata</taxon>
        <taxon>Craniata</taxon>
        <taxon>Vertebrata</taxon>
        <taxon>Euteleostomi</taxon>
        <taxon>Mammalia</taxon>
        <taxon>Eutheria</taxon>
        <taxon>Euarchontoglires</taxon>
        <taxon>Glires</taxon>
        <taxon>Rodentia</taxon>
        <taxon>Myomorpha</taxon>
        <taxon>Muroidea</taxon>
        <taxon>Muridae</taxon>
        <taxon>Murinae</taxon>
        <taxon>Mus</taxon>
        <taxon>Mus</taxon>
    </lineage>
</organism>
<gene>
    <name evidence="24" type="primary">Slc39a8</name>
    <name evidence="19" type="synonym">Zip8</name>
</gene>
<keyword id="KW-0025">Alternative splicing</keyword>
<keyword id="KW-1003">Cell membrane</keyword>
<keyword id="KW-0325">Glycoprotein</keyword>
<keyword id="KW-0406">Ion transport</keyword>
<keyword id="KW-0458">Lysosome</keyword>
<keyword id="KW-0472">Membrane</keyword>
<keyword id="KW-1185">Reference proteome</keyword>
<keyword id="KW-0732">Signal</keyword>
<keyword id="KW-0769">Symport</keyword>
<keyword id="KW-0812">Transmembrane</keyword>
<keyword id="KW-1133">Transmembrane helix</keyword>
<keyword id="KW-0813">Transport</keyword>
<keyword id="KW-0862">Zinc</keyword>
<keyword id="KW-0864">Zinc transport</keyword>